<gene>
    <name evidence="1" type="primary">L1</name>
</gene>
<proteinExistence type="evidence at protein level"/>
<keyword id="KW-0002">3D-structure</keyword>
<keyword id="KW-0167">Capsid protein</keyword>
<keyword id="KW-1015">Disulfide bond</keyword>
<keyword id="KW-1048">Host nucleus</keyword>
<keyword id="KW-0945">Host-virus interaction</keyword>
<keyword id="KW-0426">Late protein</keyword>
<keyword id="KW-1185">Reference proteome</keyword>
<keyword id="KW-1145">T=7 icosahedral capsid protein</keyword>
<keyword id="KW-1161">Viral attachment to host cell</keyword>
<keyword id="KW-1162">Viral penetration into host cytoplasm</keyword>
<keyword id="KW-0946">Virion</keyword>
<keyword id="KW-1164">Virus endocytosis by host</keyword>
<keyword id="KW-1160">Virus entry into host cell</keyword>
<sequence>MALWQQGQKLYLPPTPVSKVLCSETYVQRKSIFYHAETERLLTIGHPYYPVSIGAKTVPKVSANQYRVFKIQLPDPNQFALPDRTVHNPSKERLVWAVIGVQVSRGQPLGGTVTGHPTFNALLDAENVNRKVTTQTTDDRKQTGLDAKQQQILLLGCTPAEGEYWTTARPCVTDRLENGACPPLELKNKHIEDGDMMEIGFGAANFKEINASKSDLPLDIQNEICLYPDYLKMAEDAAGNSMFFFARKEQVYVRHIWTRGGSEKEAPTTDFYLKNNKGDATLKIPSVHFGSPSGSLVSTDNQIFNRPYWLFRAQGMNNGIAWNNLLFLTVGDNTRGTNLTISVASDGTPLTEYDSSKFNVYHRHMEEYKLAFILELCSVEITAQTVSHLQGLMPSVLENWEIGVQPPTSSILEDTYRYIESPATKCASNVIPAKEDPYAGFKFWNIDLKEKLSLDLDQFPLGRRFLAQQGAGCSTVRKRRISQKTSSKPAKKKKK</sequence>
<organismHost>
    <name type="scientific">Bos taurus</name>
    <name type="common">Bovine</name>
    <dbReference type="NCBI Taxonomy" id="9913"/>
</organismHost>
<feature type="chain" id="PRO_0000133475" description="Major capsid protein L1">
    <location>
        <begin position="1"/>
        <end position="495"/>
    </location>
</feature>
<feature type="disulfide bond" description="Interchain (with C-426)" evidence="1">
    <location>
        <position position="171"/>
    </location>
</feature>
<feature type="disulfide bond" description="Interchain (with C-171)" evidence="1">
    <location>
        <position position="426"/>
    </location>
</feature>
<evidence type="ECO:0000255" key="1">
    <source>
        <dbReference type="HAMAP-Rule" id="MF_04002"/>
    </source>
</evidence>
<dbReference type="EMBL" id="X02346">
    <property type="protein sequence ID" value="CAB46515.1"/>
    <property type="molecule type" value="Genomic_DNA"/>
</dbReference>
<dbReference type="PIR" id="A03644">
    <property type="entry name" value="P1WLB"/>
</dbReference>
<dbReference type="RefSeq" id="NP_056744.1">
    <property type="nucleotide sequence ID" value="NC_001522.1"/>
</dbReference>
<dbReference type="PDB" id="3IYJ">
    <property type="method" value="EM"/>
    <property type="resolution" value="4.20 A"/>
    <property type="chains" value="A/B/C/D/E/F=1-495"/>
</dbReference>
<dbReference type="PDBsum" id="3IYJ"/>
<dbReference type="SMR" id="P03103"/>
<dbReference type="DIP" id="DIP-59517N"/>
<dbReference type="GeneID" id="1489016"/>
<dbReference type="KEGG" id="vg:1489016"/>
<dbReference type="OrthoDB" id="5037at10239"/>
<dbReference type="EvolutionaryTrace" id="P03103"/>
<dbReference type="Proteomes" id="UP000006567">
    <property type="component" value="Genome"/>
</dbReference>
<dbReference type="GO" id="GO:0042025">
    <property type="term" value="C:host cell nucleus"/>
    <property type="evidence" value="ECO:0007669"/>
    <property type="project" value="UniProtKB-SubCell"/>
</dbReference>
<dbReference type="GO" id="GO:0039620">
    <property type="term" value="C:T=7 icosahedral viral capsid"/>
    <property type="evidence" value="ECO:0007669"/>
    <property type="project" value="UniProtKB-UniRule"/>
</dbReference>
<dbReference type="GO" id="GO:0005198">
    <property type="term" value="F:structural molecule activity"/>
    <property type="evidence" value="ECO:0007669"/>
    <property type="project" value="UniProtKB-UniRule"/>
</dbReference>
<dbReference type="GO" id="GO:0075509">
    <property type="term" value="P:endocytosis involved in viral entry into host cell"/>
    <property type="evidence" value="ECO:0007669"/>
    <property type="project" value="UniProtKB-KW"/>
</dbReference>
<dbReference type="GO" id="GO:0019062">
    <property type="term" value="P:virion attachment to host cell"/>
    <property type="evidence" value="ECO:0007669"/>
    <property type="project" value="UniProtKB-UniRule"/>
</dbReference>
<dbReference type="Gene3D" id="2.60.175.20">
    <property type="entry name" value="Major capsid L1 (late) superfamily, Papillomavirus"/>
    <property type="match status" value="1"/>
</dbReference>
<dbReference type="HAMAP" id="MF_04002">
    <property type="entry name" value="PPV_L1"/>
    <property type="match status" value="1"/>
</dbReference>
<dbReference type="InterPro" id="IPR002210">
    <property type="entry name" value="Capsid_L1_Papillomavir"/>
</dbReference>
<dbReference type="InterPro" id="IPR036973">
    <property type="entry name" value="Capsid_L1_sf_Papillomavir"/>
</dbReference>
<dbReference type="InterPro" id="IPR011222">
    <property type="entry name" value="dsDNA_vir_gr_I_capsid"/>
</dbReference>
<dbReference type="Pfam" id="PF00500">
    <property type="entry name" value="Late_protein_L1"/>
    <property type="match status" value="1"/>
</dbReference>
<dbReference type="PRINTS" id="PR00865">
    <property type="entry name" value="HPVCAPSIDL1"/>
</dbReference>
<dbReference type="SUPFAM" id="SSF88648">
    <property type="entry name" value="Group I dsDNA viruses"/>
    <property type="match status" value="1"/>
</dbReference>
<accession>P03103</accession>
<protein>
    <recommendedName>
        <fullName evidence="1">Major capsid protein L1</fullName>
    </recommendedName>
</protein>
<comment type="function">
    <text evidence="1">Forms an icosahedral capsid with a T=7 symmetry and a 50 nm diameter. The capsid is composed of 72 pentamers linked to each other by disulfide bonds and associated with L2 proteins. Binds to heparan sulfate proteoglycans on cell surface of basal layer keratinocytes to provide initial virion attachment. This binding mediates a conformational change in the virus capsid that facilitates efficient infection. The virion enters the host cell via endocytosis. During virus trafficking, L1 protein dissociates from the viral DNA and the genomic DNA is released to the host nucleus. The virion assembly takes place within the cell nucleus. Encapsulates the genomic DNA together with protein L2.</text>
</comment>
<comment type="subunit">
    <text evidence="1">Self-assembles into homopentamers. The capsid has an icosahedral symmetry and consists of 72 capsomers, with each capsomer being a pentamer of L1. Interacts with the minor capsid protein L2; this interaction is necessary for viral genome encapsidation. Interacts with protein E2; this interaction enhances E2-dependent replication and transcription activation.</text>
</comment>
<comment type="subcellular location">
    <subcellularLocation>
        <location evidence="1">Virion</location>
    </subcellularLocation>
    <subcellularLocation>
        <location evidence="1">Host nucleus</location>
    </subcellularLocation>
</comment>
<comment type="similarity">
    <text evidence="1">Belongs to the papillomaviridae L1 protein family.</text>
</comment>
<organism>
    <name type="scientific">Bovine papillomavirus type 1</name>
    <dbReference type="NCBI Taxonomy" id="337052"/>
    <lineage>
        <taxon>Viruses</taxon>
        <taxon>Monodnaviria</taxon>
        <taxon>Shotokuvirae</taxon>
        <taxon>Cossaviricota</taxon>
        <taxon>Papovaviricetes</taxon>
        <taxon>Zurhausenvirales</taxon>
        <taxon>Papillomaviridae</taxon>
        <taxon>Firstpapillomavirinae</taxon>
        <taxon>Deltapapillomavirus</taxon>
    </lineage>
</organism>
<reference key="1">
    <citation type="journal article" date="1982" name="Nature">
        <title>The primary structure and genetic organization of the bovine papillomavirus type 1 genome.</title>
        <authorList>
            <person name="Chen E.Y."/>
            <person name="Howley P.M."/>
            <person name="Levinson A.D."/>
            <person name="Seeburg P.H."/>
        </authorList>
    </citation>
    <scope>NUCLEOTIDE SEQUENCE [GENOMIC DNA]</scope>
</reference>
<name>VL1_BPV1</name>